<proteinExistence type="evidence at protein level"/>
<accession>Q9PWA3</accession>
<sequence length="518" mass="56859">MGLESVVQTMNNQSPDNNSQSRTKTTNHFLIIEQSPASWEVGDTKMCVKSSTVENVSSACFKHQQSMGKMDEPRAVLQRSHSDLTCSCKQQSYVTHVETSATDSSLSSSSSRHGPSVVRMSFQTERYGSGIRNKENTSHYQNLVTHLPALPIDQKVPTNTFDSGGIPHNTTVYTDPGRFHSAVLGPHMPGNGFSNRTMLSQATGIIHGGLTYSNIPNSAFSPMAMTVHNSSAVPCNIRQDSCMKVDATIPAYCHSLPIPSIQLVPRLVCSVSESGKEQAAPDYFHSFSTSDILTYPKLVSSVSESGLDAKRVLKCCSIPGEQLQHAQRCTQQERASSETQTACVAFSSQQTTDVAMKTKDMWTMTSANDLTKGLKPALERRDAEVQTLPTMECKSVATSPAAAAESHSHVFPEVNLEQDLEAPKSPVREVRWDDEGMTWEVYGASVDPEVLGLAIQKHLEIQIEQFQTEPAQQTGKSDEDPLNKEPSSDKMEKKRPFRTMMHSLRYPSCCARSSTAVE</sequence>
<name>GRIN2_CHICK</name>
<protein>
    <recommendedName>
        <fullName>GRIN2-like protein</fullName>
    </recommendedName>
    <alternativeName>
        <fullName>G protein-regulated inducer of neurite outgrowth 2-like protein</fullName>
    </alternativeName>
    <alternativeName>
        <fullName>G(o)-alpha-interacting protein 6</fullName>
    </alternativeName>
</protein>
<reference key="1">
    <citation type="journal article" date="1999" name="J. Biol. Chem.">
        <title>Modulation of rap activity by direct interaction of Galpha(o) with Rap1 GTPase-activating protein.</title>
        <authorList>
            <person name="Jordan J.D."/>
            <person name="Carey K.D."/>
            <person name="Stork P.J.S."/>
            <person name="Iyengar R."/>
        </authorList>
    </citation>
    <scope>NUCLEOTIDE SEQUENCE [MRNA]</scope>
    <scope>INTERACTION WITH GNAO1</scope>
    <source>
        <tissue>Spinal ganglion</tissue>
    </source>
</reference>
<evidence type="ECO:0000250" key="1"/>
<evidence type="ECO:0000256" key="2">
    <source>
        <dbReference type="SAM" id="MobiDB-lite"/>
    </source>
</evidence>
<organism>
    <name type="scientific">Gallus gallus</name>
    <name type="common">Chicken</name>
    <dbReference type="NCBI Taxonomy" id="9031"/>
    <lineage>
        <taxon>Eukaryota</taxon>
        <taxon>Metazoa</taxon>
        <taxon>Chordata</taxon>
        <taxon>Craniata</taxon>
        <taxon>Vertebrata</taxon>
        <taxon>Euteleostomi</taxon>
        <taxon>Archelosauria</taxon>
        <taxon>Archosauria</taxon>
        <taxon>Dinosauria</taxon>
        <taxon>Saurischia</taxon>
        <taxon>Theropoda</taxon>
        <taxon>Coelurosauria</taxon>
        <taxon>Aves</taxon>
        <taxon>Neognathae</taxon>
        <taxon>Galloanserae</taxon>
        <taxon>Galliformes</taxon>
        <taxon>Phasianidae</taxon>
        <taxon>Phasianinae</taxon>
        <taxon>Gallus</taxon>
    </lineage>
</organism>
<keyword id="KW-1185">Reference proteome</keyword>
<feature type="chain" id="PRO_0000235979" description="GRIN2-like protein">
    <location>
        <begin position="1"/>
        <end position="518"/>
    </location>
</feature>
<feature type="region of interest" description="Disordered" evidence="2">
    <location>
        <begin position="1"/>
        <end position="23"/>
    </location>
</feature>
<feature type="region of interest" description="Disordered" evidence="2">
    <location>
        <begin position="467"/>
        <end position="500"/>
    </location>
</feature>
<feature type="compositionally biased region" description="Basic and acidic residues" evidence="2">
    <location>
        <begin position="476"/>
        <end position="494"/>
    </location>
</feature>
<dbReference type="EMBL" id="AF151734">
    <property type="protein sequence ID" value="AAD45945.1"/>
    <property type="molecule type" value="mRNA"/>
</dbReference>
<dbReference type="FunCoup" id="Q9PWA3">
    <property type="interactions" value="2"/>
</dbReference>
<dbReference type="STRING" id="9031.ENSGALP00000003179"/>
<dbReference type="PaxDb" id="9031-ENSGALP00000003179"/>
<dbReference type="VEuPathDB" id="HostDB:geneid_395648"/>
<dbReference type="eggNOG" id="ENOG502SG81">
    <property type="taxonomic scope" value="Eukaryota"/>
</dbReference>
<dbReference type="InParanoid" id="Q9PWA3"/>
<dbReference type="PhylomeDB" id="Q9PWA3"/>
<dbReference type="PRO" id="PR:Q9PWA3"/>
<dbReference type="Proteomes" id="UP000000539">
    <property type="component" value="Unassembled WGS sequence"/>
</dbReference>
<dbReference type="GO" id="GO:0005886">
    <property type="term" value="C:plasma membrane"/>
    <property type="evidence" value="ECO:0000318"/>
    <property type="project" value="GO_Central"/>
</dbReference>
<dbReference type="GO" id="GO:0031175">
    <property type="term" value="P:neuron projection development"/>
    <property type="evidence" value="ECO:0000318"/>
    <property type="project" value="GO_Central"/>
</dbReference>
<dbReference type="InterPro" id="IPR026646">
    <property type="entry name" value="GPRIN2-like/GPRIN3"/>
</dbReference>
<dbReference type="InterPro" id="IPR032745">
    <property type="entry name" value="GRIN_C"/>
</dbReference>
<dbReference type="PANTHER" id="PTHR15718:SF5">
    <property type="entry name" value="G PROTEIN-REGULATED INDUCER OF NEURITE OUTGROWTH 2"/>
    <property type="match status" value="1"/>
</dbReference>
<dbReference type="PANTHER" id="PTHR15718">
    <property type="entry name" value="G PROTEIN-REGULATED INDUCER OF NEURITE OUTGROWTH C-TERMINAL DOMAIN-CONTAINING PROTEIN"/>
    <property type="match status" value="1"/>
</dbReference>
<dbReference type="Pfam" id="PF15235">
    <property type="entry name" value="GRIN_C"/>
    <property type="match status" value="1"/>
</dbReference>
<comment type="function">
    <text evidence="1">May be involved in neurite outgrowth.</text>
</comment>
<comment type="subunit">
    <text>May interact with GNAO1.</text>
</comment>